<organism>
    <name type="scientific">Mycobacterium sp. (strain MCS)</name>
    <dbReference type="NCBI Taxonomy" id="164756"/>
    <lineage>
        <taxon>Bacteria</taxon>
        <taxon>Bacillati</taxon>
        <taxon>Actinomycetota</taxon>
        <taxon>Actinomycetes</taxon>
        <taxon>Mycobacteriales</taxon>
        <taxon>Mycobacteriaceae</taxon>
        <taxon>Mycobacterium</taxon>
    </lineage>
</organism>
<gene>
    <name evidence="2" type="primary">groEL2</name>
    <name evidence="2" type="synonym">groL2</name>
    <name type="ordered locus">Mmcs_0607</name>
</gene>
<proteinExistence type="inferred from homology"/>
<feature type="chain" id="PRO_0000332024" description="Chaperonin GroEL 2">
    <location>
        <begin position="1"/>
        <end position="541"/>
    </location>
</feature>
<feature type="binding site" evidence="2">
    <location>
        <begin position="29"/>
        <end position="32"/>
    </location>
    <ligand>
        <name>ATP</name>
        <dbReference type="ChEBI" id="CHEBI:30616"/>
    </ligand>
</feature>
<feature type="binding site" evidence="2">
    <location>
        <begin position="86"/>
        <end position="90"/>
    </location>
    <ligand>
        <name>ATP</name>
        <dbReference type="ChEBI" id="CHEBI:30616"/>
    </ligand>
</feature>
<feature type="binding site" evidence="2">
    <location>
        <position position="413"/>
    </location>
    <ligand>
        <name>ATP</name>
        <dbReference type="ChEBI" id="CHEBI:30616"/>
    </ligand>
</feature>
<feature type="binding site" evidence="2">
    <location>
        <begin position="476"/>
        <end position="478"/>
    </location>
    <ligand>
        <name>ATP</name>
        <dbReference type="ChEBI" id="CHEBI:30616"/>
    </ligand>
</feature>
<feature type="binding site" evidence="2">
    <location>
        <position position="492"/>
    </location>
    <ligand>
        <name>ATP</name>
        <dbReference type="ChEBI" id="CHEBI:30616"/>
    </ligand>
</feature>
<reference key="1">
    <citation type="submission" date="2006-06" db="EMBL/GenBank/DDBJ databases">
        <title>Complete sequence of chromosome of Mycobacterium sp. MCS.</title>
        <authorList>
            <consortium name="US DOE Joint Genome Institute"/>
            <person name="Copeland A."/>
            <person name="Lucas S."/>
            <person name="Lapidus A."/>
            <person name="Barry K."/>
            <person name="Detter J.C."/>
            <person name="Glavina del Rio T."/>
            <person name="Hammon N."/>
            <person name="Israni S."/>
            <person name="Dalin E."/>
            <person name="Tice H."/>
            <person name="Pitluck S."/>
            <person name="Martinez M."/>
            <person name="Schmutz J."/>
            <person name="Larimer F."/>
            <person name="Land M."/>
            <person name="Hauser L."/>
            <person name="Kyrpides N."/>
            <person name="Kim E."/>
            <person name="Miller C.D."/>
            <person name="Hughes J.E."/>
            <person name="Anderson A.J."/>
            <person name="Sims R.C."/>
            <person name="Richardson P."/>
        </authorList>
    </citation>
    <scope>NUCLEOTIDE SEQUENCE [LARGE SCALE GENOMIC DNA]</scope>
    <source>
        <strain>MCS</strain>
    </source>
</reference>
<protein>
    <recommendedName>
        <fullName evidence="2">Chaperonin GroEL 2</fullName>
        <ecNumber evidence="2">5.6.1.7</ecNumber>
    </recommendedName>
    <alternativeName>
        <fullName evidence="2">60 kDa chaperonin 2</fullName>
    </alternativeName>
    <alternativeName>
        <fullName evidence="2">Chaperonin-60 2</fullName>
        <shortName evidence="2">Cpn60 2</shortName>
    </alternativeName>
</protein>
<accession>Q1BEF6</accession>
<sequence>MAKTIAYDEEARRGLERGLNALADAVKVTLGPKGRNVVLEKKWGAPTITNDGVSIAKEIELEDPYEKIGAELVKEVAKKTDDVAGDGTTTATVLAQALVREGLRNVAAGANPLGLKRGIEKAVEKVTETLLKSAKEVETKEQIAATAGISAGDQSIGDLIAEAMDKVGNEGVITVEESNTFGLQLELTEGMRFDKGYISGYFVTDAERQEAVLEDPYILLVSSKISTVKDLLPLLEKVIQSGKPLLIIAEDVEGEALSTLVVNKIRGTFKSVAVKAPGFGDRRKAMLQDMAILTGGQVISEEVGLSLETADISLLGQARKVVITKDETTIVEGAGDAEAIQGRVAQIRAEIENSDSDYDREKLQERLAKLAGGVAVIKAGAATEVELKERKHRIEDAVRNAKAAVEEGIVAGGGVALLQAAPSLEELNLTGDEATGANIVRVALEAPLKQIAFNGGLEPGVVAEKVRNSAAGTGLNAATGEYEDLLAAGVADPVKVTRSALQNAASIAALFLTTEAVVADKPEKSAAPAGDPTGGMGGMDF</sequence>
<name>CH602_MYCSS</name>
<dbReference type="EC" id="5.6.1.7" evidence="2"/>
<dbReference type="EMBL" id="CP000384">
    <property type="protein sequence ID" value="ABG06728.1"/>
    <property type="status" value="ALT_INIT"/>
    <property type="molecule type" value="Genomic_DNA"/>
</dbReference>
<dbReference type="SMR" id="Q1BEF6"/>
<dbReference type="KEGG" id="mmc:Mmcs_0607"/>
<dbReference type="HOGENOM" id="CLU_016503_3_0_11"/>
<dbReference type="BioCyc" id="MSP164756:G1G6O-621-MONOMER"/>
<dbReference type="GO" id="GO:0042603">
    <property type="term" value="C:capsule"/>
    <property type="evidence" value="ECO:0007669"/>
    <property type="project" value="UniProtKB-SubCell"/>
</dbReference>
<dbReference type="GO" id="GO:0009986">
    <property type="term" value="C:cell surface"/>
    <property type="evidence" value="ECO:0007669"/>
    <property type="project" value="UniProtKB-SubCell"/>
</dbReference>
<dbReference type="GO" id="GO:0005737">
    <property type="term" value="C:cytoplasm"/>
    <property type="evidence" value="ECO:0007669"/>
    <property type="project" value="UniProtKB-UniRule"/>
</dbReference>
<dbReference type="GO" id="GO:0005576">
    <property type="term" value="C:extracellular region"/>
    <property type="evidence" value="ECO:0007669"/>
    <property type="project" value="UniProtKB-KW"/>
</dbReference>
<dbReference type="GO" id="GO:0005524">
    <property type="term" value="F:ATP binding"/>
    <property type="evidence" value="ECO:0007669"/>
    <property type="project" value="UniProtKB-UniRule"/>
</dbReference>
<dbReference type="GO" id="GO:0140662">
    <property type="term" value="F:ATP-dependent protein folding chaperone"/>
    <property type="evidence" value="ECO:0007669"/>
    <property type="project" value="InterPro"/>
</dbReference>
<dbReference type="GO" id="GO:0016853">
    <property type="term" value="F:isomerase activity"/>
    <property type="evidence" value="ECO:0007669"/>
    <property type="project" value="UniProtKB-KW"/>
</dbReference>
<dbReference type="GO" id="GO:0051082">
    <property type="term" value="F:unfolded protein binding"/>
    <property type="evidence" value="ECO:0007669"/>
    <property type="project" value="UniProtKB-UniRule"/>
</dbReference>
<dbReference type="GO" id="GO:0042026">
    <property type="term" value="P:protein refolding"/>
    <property type="evidence" value="ECO:0007669"/>
    <property type="project" value="UniProtKB-UniRule"/>
</dbReference>
<dbReference type="CDD" id="cd03344">
    <property type="entry name" value="GroEL"/>
    <property type="match status" value="1"/>
</dbReference>
<dbReference type="FunFam" id="3.50.7.10:FF:000001">
    <property type="entry name" value="60 kDa chaperonin"/>
    <property type="match status" value="1"/>
</dbReference>
<dbReference type="Gene3D" id="3.50.7.10">
    <property type="entry name" value="GroEL"/>
    <property type="match status" value="1"/>
</dbReference>
<dbReference type="Gene3D" id="1.10.560.10">
    <property type="entry name" value="GroEL-like equatorial domain"/>
    <property type="match status" value="1"/>
</dbReference>
<dbReference type="Gene3D" id="3.30.260.10">
    <property type="entry name" value="TCP-1-like chaperonin intermediate domain"/>
    <property type="match status" value="1"/>
</dbReference>
<dbReference type="HAMAP" id="MF_00600">
    <property type="entry name" value="CH60"/>
    <property type="match status" value="1"/>
</dbReference>
<dbReference type="InterPro" id="IPR018370">
    <property type="entry name" value="Chaperonin_Cpn60_CS"/>
</dbReference>
<dbReference type="InterPro" id="IPR001844">
    <property type="entry name" value="Cpn60/GroEL"/>
</dbReference>
<dbReference type="InterPro" id="IPR002423">
    <property type="entry name" value="Cpn60/GroEL/TCP-1"/>
</dbReference>
<dbReference type="InterPro" id="IPR027409">
    <property type="entry name" value="GroEL-like_apical_dom_sf"/>
</dbReference>
<dbReference type="InterPro" id="IPR027413">
    <property type="entry name" value="GROEL-like_equatorial_sf"/>
</dbReference>
<dbReference type="InterPro" id="IPR027410">
    <property type="entry name" value="TCP-1-like_intermed_sf"/>
</dbReference>
<dbReference type="NCBIfam" id="TIGR02348">
    <property type="entry name" value="GroEL"/>
    <property type="match status" value="1"/>
</dbReference>
<dbReference type="NCBIfam" id="NF000592">
    <property type="entry name" value="PRK00013.1"/>
    <property type="match status" value="1"/>
</dbReference>
<dbReference type="NCBIfam" id="NF009487">
    <property type="entry name" value="PRK12849.1"/>
    <property type="match status" value="1"/>
</dbReference>
<dbReference type="NCBIfam" id="NF009488">
    <property type="entry name" value="PRK12850.1"/>
    <property type="match status" value="1"/>
</dbReference>
<dbReference type="NCBIfam" id="NF009489">
    <property type="entry name" value="PRK12851.1"/>
    <property type="match status" value="1"/>
</dbReference>
<dbReference type="PANTHER" id="PTHR45633">
    <property type="entry name" value="60 KDA HEAT SHOCK PROTEIN, MITOCHONDRIAL"/>
    <property type="match status" value="1"/>
</dbReference>
<dbReference type="Pfam" id="PF00118">
    <property type="entry name" value="Cpn60_TCP1"/>
    <property type="match status" value="1"/>
</dbReference>
<dbReference type="PRINTS" id="PR00298">
    <property type="entry name" value="CHAPERONIN60"/>
</dbReference>
<dbReference type="SUPFAM" id="SSF52029">
    <property type="entry name" value="GroEL apical domain-like"/>
    <property type="match status" value="1"/>
</dbReference>
<dbReference type="SUPFAM" id="SSF48592">
    <property type="entry name" value="GroEL equatorial domain-like"/>
    <property type="match status" value="1"/>
</dbReference>
<dbReference type="SUPFAM" id="SSF54849">
    <property type="entry name" value="GroEL-intermediate domain like"/>
    <property type="match status" value="1"/>
</dbReference>
<dbReference type="PROSITE" id="PS00296">
    <property type="entry name" value="CHAPERONINS_CPN60"/>
    <property type="match status" value="1"/>
</dbReference>
<keyword id="KW-0067">ATP-binding</keyword>
<keyword id="KW-0134">Cell wall</keyword>
<keyword id="KW-0143">Chaperone</keyword>
<keyword id="KW-0413">Isomerase</keyword>
<keyword id="KW-0547">Nucleotide-binding</keyword>
<keyword id="KW-0964">Secreted</keyword>
<comment type="function">
    <text evidence="2">Together with its co-chaperonin GroES, plays an essential role in assisting protein folding. The GroEL-GroES system forms a nano-cage that allows encapsulation of the non-native substrate proteins and provides a physical environment optimized to promote and accelerate protein folding.</text>
</comment>
<comment type="catalytic activity">
    <reaction evidence="2">
        <text>ATP + H2O + a folded polypeptide = ADP + phosphate + an unfolded polypeptide.</text>
        <dbReference type="EC" id="5.6.1.7"/>
    </reaction>
</comment>
<comment type="subunit">
    <text evidence="2">Forms a cylinder of 14 subunits composed of two heptameric rings stacked back-to-back. Interacts with the co-chaperonin GroES.</text>
</comment>
<comment type="subcellular location">
    <subcellularLocation>
        <location evidence="1">Secreted</location>
        <location evidence="1">Capsule</location>
    </subcellularLocation>
    <subcellularLocation>
        <location evidence="1">Cell surface</location>
    </subcellularLocation>
    <subcellularLocation>
        <location evidence="1">Secreted</location>
        <location evidence="1">Cell wall</location>
    </subcellularLocation>
</comment>
<comment type="similarity">
    <text evidence="2">Belongs to the chaperonin (HSP60) family.</text>
</comment>
<comment type="sequence caution" evidence="3">
    <conflict type="erroneous initiation">
        <sequence resource="EMBL-CDS" id="ABG06728"/>
    </conflict>
</comment>
<evidence type="ECO:0000250" key="1">
    <source>
        <dbReference type="UniProtKB" id="P9WPE7"/>
    </source>
</evidence>
<evidence type="ECO:0000255" key="2">
    <source>
        <dbReference type="HAMAP-Rule" id="MF_00600"/>
    </source>
</evidence>
<evidence type="ECO:0000305" key="3"/>